<keyword id="KW-0963">Cytoplasm</keyword>
<keyword id="KW-0489">Methyltransferase</keyword>
<keyword id="KW-1185">Reference proteome</keyword>
<keyword id="KW-0698">rRNA processing</keyword>
<keyword id="KW-0949">S-adenosyl-L-methionine</keyword>
<keyword id="KW-0808">Transferase</keyword>
<protein>
    <recommendedName>
        <fullName evidence="1">Ribosomal RNA large subunit methyltransferase G</fullName>
        <ecNumber evidence="1">2.1.1.174</ecNumber>
    </recommendedName>
    <alternativeName>
        <fullName evidence="1">23S rRNA m2G1835 methyltransferase</fullName>
    </alternativeName>
    <alternativeName>
        <fullName evidence="1">rRNA (guanine-N(2)-)-methyltransferase RlmG</fullName>
    </alternativeName>
</protein>
<sequence length="378" mass="41863">MTTQFSVAGVELELLRYPAQQESNLQAWDAADEHLLKSLIESEQAAVPTAIINDSFGALSCSVSKLNPSWPLCVETDARTSFLGTEQNHGRNQLPLDNLQWFTSRDTLPENLALVLMKLPKNLSYFAHQLTRLSQVLPAGTRILVAAKAKSINGALLDVFAKHLGPASASLAWKNTRVITCISDGKPRPLAKEVTWAVPEYQLEISNLSNVFAANKLDIGARIMLENLPKGDFKSIVDLGCGNGVLGLRTAQLFPEADIHFIDDSEMAVASAKANWARNQLPADKGHFYWDDCMTHLPEEVQPDLVLCNPPFHQGEAITDHIAWQMFLDARRRLKDGGILHIVGNRHLAYHVKLQRLFKNCTTVASNGKFVILQAQKK</sequence>
<gene>
    <name evidence="1" type="primary">rlmG</name>
    <name type="ordered locus">Sbal_0918</name>
</gene>
<accession>A3D130</accession>
<comment type="function">
    <text evidence="1">Specifically methylates the guanine in position 1835 (m2G1835) of 23S rRNA.</text>
</comment>
<comment type="catalytic activity">
    <reaction evidence="1">
        <text>guanosine(1835) in 23S rRNA + S-adenosyl-L-methionine = N(2)-methylguanosine(1835) in 23S rRNA + S-adenosyl-L-homocysteine + H(+)</text>
        <dbReference type="Rhea" id="RHEA:42744"/>
        <dbReference type="Rhea" id="RHEA-COMP:10217"/>
        <dbReference type="Rhea" id="RHEA-COMP:10218"/>
        <dbReference type="ChEBI" id="CHEBI:15378"/>
        <dbReference type="ChEBI" id="CHEBI:57856"/>
        <dbReference type="ChEBI" id="CHEBI:59789"/>
        <dbReference type="ChEBI" id="CHEBI:74269"/>
        <dbReference type="ChEBI" id="CHEBI:74481"/>
        <dbReference type="EC" id="2.1.1.174"/>
    </reaction>
</comment>
<comment type="subcellular location">
    <subcellularLocation>
        <location evidence="1">Cytoplasm</location>
    </subcellularLocation>
</comment>
<comment type="similarity">
    <text evidence="1">Belongs to the methyltransferase superfamily. RlmG family.</text>
</comment>
<evidence type="ECO:0000255" key="1">
    <source>
        <dbReference type="HAMAP-Rule" id="MF_01859"/>
    </source>
</evidence>
<organism>
    <name type="scientific">Shewanella baltica (strain OS155 / ATCC BAA-1091)</name>
    <dbReference type="NCBI Taxonomy" id="325240"/>
    <lineage>
        <taxon>Bacteria</taxon>
        <taxon>Pseudomonadati</taxon>
        <taxon>Pseudomonadota</taxon>
        <taxon>Gammaproteobacteria</taxon>
        <taxon>Alteromonadales</taxon>
        <taxon>Shewanellaceae</taxon>
        <taxon>Shewanella</taxon>
    </lineage>
</organism>
<proteinExistence type="inferred from homology"/>
<feature type="chain" id="PRO_0000366505" description="Ribosomal RNA large subunit methyltransferase G">
    <location>
        <begin position="1"/>
        <end position="378"/>
    </location>
</feature>
<name>RLMG_SHEB5</name>
<dbReference type="EC" id="2.1.1.174" evidence="1"/>
<dbReference type="EMBL" id="CP000563">
    <property type="protein sequence ID" value="ABN60443.1"/>
    <property type="molecule type" value="Genomic_DNA"/>
</dbReference>
<dbReference type="RefSeq" id="WP_011845991.1">
    <property type="nucleotide sequence ID" value="NC_009052.1"/>
</dbReference>
<dbReference type="SMR" id="A3D130"/>
<dbReference type="STRING" id="325240.Sbal_0918"/>
<dbReference type="KEGG" id="sbl:Sbal_0918"/>
<dbReference type="HOGENOM" id="CLU_040288_4_0_6"/>
<dbReference type="OrthoDB" id="29650at2"/>
<dbReference type="Proteomes" id="UP000001557">
    <property type="component" value="Chromosome"/>
</dbReference>
<dbReference type="GO" id="GO:0005737">
    <property type="term" value="C:cytoplasm"/>
    <property type="evidence" value="ECO:0007669"/>
    <property type="project" value="UniProtKB-SubCell"/>
</dbReference>
<dbReference type="GO" id="GO:0052916">
    <property type="term" value="F:23S rRNA (guanine(1835)-N(2))-methyltransferase activity"/>
    <property type="evidence" value="ECO:0007669"/>
    <property type="project" value="UniProtKB-EC"/>
</dbReference>
<dbReference type="GO" id="GO:0003676">
    <property type="term" value="F:nucleic acid binding"/>
    <property type="evidence" value="ECO:0007669"/>
    <property type="project" value="InterPro"/>
</dbReference>
<dbReference type="CDD" id="cd02440">
    <property type="entry name" value="AdoMet_MTases"/>
    <property type="match status" value="1"/>
</dbReference>
<dbReference type="Gene3D" id="3.40.50.150">
    <property type="entry name" value="Vaccinia Virus protein VP39"/>
    <property type="match status" value="2"/>
</dbReference>
<dbReference type="HAMAP" id="MF_01859">
    <property type="entry name" value="23SrRNA_methyltr_G"/>
    <property type="match status" value="1"/>
</dbReference>
<dbReference type="InterPro" id="IPR002052">
    <property type="entry name" value="DNA_methylase_N6_adenine_CS"/>
</dbReference>
<dbReference type="InterPro" id="IPR017237">
    <property type="entry name" value="rRNA_m2G-MeTrfase_RlmG"/>
</dbReference>
<dbReference type="InterPro" id="IPR046977">
    <property type="entry name" value="RsmC/RlmG"/>
</dbReference>
<dbReference type="InterPro" id="IPR029063">
    <property type="entry name" value="SAM-dependent_MTases_sf"/>
</dbReference>
<dbReference type="InterPro" id="IPR007848">
    <property type="entry name" value="Small_mtfrase_dom"/>
</dbReference>
<dbReference type="PANTHER" id="PTHR47816:SF5">
    <property type="entry name" value="RIBOSOMAL RNA LARGE SUBUNIT METHYLTRANSFERASE G"/>
    <property type="match status" value="1"/>
</dbReference>
<dbReference type="PANTHER" id="PTHR47816">
    <property type="entry name" value="RIBOSOMAL RNA SMALL SUBUNIT METHYLTRANSFERASE C"/>
    <property type="match status" value="1"/>
</dbReference>
<dbReference type="Pfam" id="PF05175">
    <property type="entry name" value="MTS"/>
    <property type="match status" value="1"/>
</dbReference>
<dbReference type="PIRSF" id="PIRSF037565">
    <property type="entry name" value="RRNA_m2G_Mtase_RsmD_prd"/>
    <property type="match status" value="1"/>
</dbReference>
<dbReference type="SUPFAM" id="SSF53335">
    <property type="entry name" value="S-adenosyl-L-methionine-dependent methyltransferases"/>
    <property type="match status" value="1"/>
</dbReference>
<reference key="1">
    <citation type="submission" date="2007-02" db="EMBL/GenBank/DDBJ databases">
        <title>Complete sequence of chromosome of Shewanella baltica OS155.</title>
        <authorList>
            <consortium name="US DOE Joint Genome Institute"/>
            <person name="Copeland A."/>
            <person name="Lucas S."/>
            <person name="Lapidus A."/>
            <person name="Barry K."/>
            <person name="Detter J.C."/>
            <person name="Glavina del Rio T."/>
            <person name="Hammon N."/>
            <person name="Israni S."/>
            <person name="Dalin E."/>
            <person name="Tice H."/>
            <person name="Pitluck S."/>
            <person name="Sims D.R."/>
            <person name="Brettin T."/>
            <person name="Bruce D."/>
            <person name="Han C."/>
            <person name="Tapia R."/>
            <person name="Brainard J."/>
            <person name="Schmutz J."/>
            <person name="Larimer F."/>
            <person name="Land M."/>
            <person name="Hauser L."/>
            <person name="Kyrpides N."/>
            <person name="Mikhailova N."/>
            <person name="Brettar I."/>
            <person name="Klappenbach J."/>
            <person name="Konstantinidis K."/>
            <person name="Rodrigues J."/>
            <person name="Tiedje J."/>
            <person name="Richardson P."/>
        </authorList>
    </citation>
    <scope>NUCLEOTIDE SEQUENCE [LARGE SCALE GENOMIC DNA]</scope>
    <source>
        <strain>OS155 / ATCC BAA-1091</strain>
    </source>
</reference>